<keyword id="KW-0963">Cytoplasm</keyword>
<keyword id="KW-0251">Elongation factor</keyword>
<keyword id="KW-0648">Protein biosynthesis</keyword>
<comment type="function">
    <text evidence="1">Associates with the EF-Tu.GDP complex and induces the exchange of GDP to GTP. It remains bound to the aminoacyl-tRNA.EF-Tu.GTP complex up to the GTP hydrolysis stage on the ribosome.</text>
</comment>
<comment type="subcellular location">
    <subcellularLocation>
        <location evidence="1">Cytoplasm</location>
    </subcellularLocation>
</comment>
<comment type="similarity">
    <text evidence="1">Belongs to the EF-Ts family.</text>
</comment>
<accession>Q601Z2</accession>
<proteinExistence type="inferred from homology"/>
<reference key="1">
    <citation type="journal article" date="2004" name="J. Bacteriol.">
        <title>The genome sequence of Mycoplasma hyopneumoniae strain 232, the agent of swine mycoplasmosis.</title>
        <authorList>
            <person name="Minion F.C."/>
            <person name="Lefkowitz E.J."/>
            <person name="Madsen M.L."/>
            <person name="Cleary B.J."/>
            <person name="Swartzell S.M."/>
            <person name="Mahairas G.G."/>
        </authorList>
    </citation>
    <scope>NUCLEOTIDE SEQUENCE [LARGE SCALE GENOMIC DNA]</scope>
    <source>
        <strain>232</strain>
    </source>
</reference>
<sequence>MSQIDKMAKIKKLREISDAPFVDCKKALENSDYDIDLAINWLNKNGKSKALKKSDRIAAEGLVLAKKDANSVLVFELNSETDFVAKNQNFINLQQKIGELLLANDFVNLEDALLIQDEAGRSISELMILATATIGEKITLRRVFKTKYSLEQSVEVYTHSNGQIAVITILKGGNLEIAKNISMHVAALNPQYILKVEVPNEKLQEIQLEVEKKAFAEVKNFEKKPENVRVGILKGMIDKQLSEFVLELQPLATDSAVTVEKYLAQNSATLEKVVRFEVGEGIQKQNVDFSAEVNQQIQEFQKK</sequence>
<protein>
    <recommendedName>
        <fullName evidence="1">Elongation factor Ts</fullName>
        <shortName evidence="1">EF-Ts</shortName>
    </recommendedName>
</protein>
<organism>
    <name type="scientific">Mesomycoplasma hyopneumoniae (strain 232)</name>
    <name type="common">Mycoplasma hyopneumoniae</name>
    <dbReference type="NCBI Taxonomy" id="295358"/>
    <lineage>
        <taxon>Bacteria</taxon>
        <taxon>Bacillati</taxon>
        <taxon>Mycoplasmatota</taxon>
        <taxon>Mycoplasmoidales</taxon>
        <taxon>Metamycoplasmataceae</taxon>
        <taxon>Mesomycoplasma</taxon>
    </lineage>
</organism>
<feature type="chain" id="PRO_0000161152" description="Elongation factor Ts">
    <location>
        <begin position="1"/>
        <end position="303"/>
    </location>
</feature>
<feature type="region of interest" description="Involved in Mg(2+) ion dislocation from EF-Tu" evidence="1">
    <location>
        <begin position="81"/>
        <end position="84"/>
    </location>
</feature>
<name>EFTS_MESH2</name>
<dbReference type="EMBL" id="AE017332">
    <property type="protein sequence ID" value="AAV27383.1"/>
    <property type="molecule type" value="Genomic_DNA"/>
</dbReference>
<dbReference type="RefSeq" id="WP_011205897.1">
    <property type="nucleotide sequence ID" value="NC_006360.1"/>
</dbReference>
<dbReference type="SMR" id="Q601Z2"/>
<dbReference type="KEGG" id="mhy:mhp059"/>
<dbReference type="eggNOG" id="COG0264">
    <property type="taxonomic scope" value="Bacteria"/>
</dbReference>
<dbReference type="HOGENOM" id="CLU_047155_0_2_14"/>
<dbReference type="PhylomeDB" id="Q601Z2"/>
<dbReference type="Proteomes" id="UP000006822">
    <property type="component" value="Chromosome"/>
</dbReference>
<dbReference type="GO" id="GO:0005737">
    <property type="term" value="C:cytoplasm"/>
    <property type="evidence" value="ECO:0007669"/>
    <property type="project" value="UniProtKB-SubCell"/>
</dbReference>
<dbReference type="GO" id="GO:0003746">
    <property type="term" value="F:translation elongation factor activity"/>
    <property type="evidence" value="ECO:0007669"/>
    <property type="project" value="UniProtKB-UniRule"/>
</dbReference>
<dbReference type="CDD" id="cd14275">
    <property type="entry name" value="UBA_EF-Ts"/>
    <property type="match status" value="1"/>
</dbReference>
<dbReference type="FunFam" id="1.10.8.10:FF:000001">
    <property type="entry name" value="Elongation factor Ts"/>
    <property type="match status" value="1"/>
</dbReference>
<dbReference type="Gene3D" id="1.10.286.20">
    <property type="match status" value="1"/>
</dbReference>
<dbReference type="Gene3D" id="1.10.8.10">
    <property type="entry name" value="DNA helicase RuvA subunit, C-terminal domain"/>
    <property type="match status" value="1"/>
</dbReference>
<dbReference type="Gene3D" id="3.30.479.20">
    <property type="entry name" value="Elongation factor Ts, dimerisation domain"/>
    <property type="match status" value="2"/>
</dbReference>
<dbReference type="HAMAP" id="MF_00050">
    <property type="entry name" value="EF_Ts"/>
    <property type="match status" value="1"/>
</dbReference>
<dbReference type="InterPro" id="IPR036402">
    <property type="entry name" value="EF-Ts_dimer_sf"/>
</dbReference>
<dbReference type="InterPro" id="IPR001816">
    <property type="entry name" value="Transl_elong_EFTs/EF1B"/>
</dbReference>
<dbReference type="InterPro" id="IPR014039">
    <property type="entry name" value="Transl_elong_EFTs/EF1B_dimer"/>
</dbReference>
<dbReference type="InterPro" id="IPR018101">
    <property type="entry name" value="Transl_elong_Ts_CS"/>
</dbReference>
<dbReference type="InterPro" id="IPR009060">
    <property type="entry name" value="UBA-like_sf"/>
</dbReference>
<dbReference type="NCBIfam" id="TIGR00116">
    <property type="entry name" value="tsf"/>
    <property type="match status" value="1"/>
</dbReference>
<dbReference type="PANTHER" id="PTHR11741">
    <property type="entry name" value="ELONGATION FACTOR TS"/>
    <property type="match status" value="1"/>
</dbReference>
<dbReference type="PANTHER" id="PTHR11741:SF0">
    <property type="entry name" value="ELONGATION FACTOR TS, MITOCHONDRIAL"/>
    <property type="match status" value="1"/>
</dbReference>
<dbReference type="Pfam" id="PF00889">
    <property type="entry name" value="EF_TS"/>
    <property type="match status" value="1"/>
</dbReference>
<dbReference type="SUPFAM" id="SSF54713">
    <property type="entry name" value="Elongation factor Ts (EF-Ts), dimerisation domain"/>
    <property type="match status" value="2"/>
</dbReference>
<dbReference type="SUPFAM" id="SSF46934">
    <property type="entry name" value="UBA-like"/>
    <property type="match status" value="1"/>
</dbReference>
<dbReference type="PROSITE" id="PS01127">
    <property type="entry name" value="EF_TS_2"/>
    <property type="match status" value="1"/>
</dbReference>
<evidence type="ECO:0000255" key="1">
    <source>
        <dbReference type="HAMAP-Rule" id="MF_00050"/>
    </source>
</evidence>
<gene>
    <name evidence="1" type="primary">tsf</name>
    <name type="ordered locus">mhp059</name>
</gene>